<keyword id="KW-0131">Cell cycle</keyword>
<keyword id="KW-0132">Cell division</keyword>
<keyword id="KW-0133">Cell shape</keyword>
<keyword id="KW-0961">Cell wall biogenesis/degradation</keyword>
<keyword id="KW-0963">Cytoplasm</keyword>
<keyword id="KW-0573">Peptidoglycan synthesis</keyword>
<keyword id="KW-0670">Pyruvate</keyword>
<keyword id="KW-1185">Reference proteome</keyword>
<keyword id="KW-0808">Transferase</keyword>
<evidence type="ECO:0000255" key="1">
    <source>
        <dbReference type="HAMAP-Rule" id="MF_00111"/>
    </source>
</evidence>
<reference key="1">
    <citation type="journal article" date="2009" name="Environ. Microbiol.">
        <title>Genome sequence of Desulfobacterium autotrophicum HRM2, a marine sulfate reducer oxidizing organic carbon completely to carbon dioxide.</title>
        <authorList>
            <person name="Strittmatter A.W."/>
            <person name="Liesegang H."/>
            <person name="Rabus R."/>
            <person name="Decker I."/>
            <person name="Amann J."/>
            <person name="Andres S."/>
            <person name="Henne A."/>
            <person name="Fricke W.F."/>
            <person name="Martinez-Arias R."/>
            <person name="Bartels D."/>
            <person name="Goesmann A."/>
            <person name="Krause L."/>
            <person name="Puehler A."/>
            <person name="Klenk H.P."/>
            <person name="Richter M."/>
            <person name="Schuler M."/>
            <person name="Gloeckner F.O."/>
            <person name="Meyerdierks A."/>
            <person name="Gottschalk G."/>
            <person name="Amann R."/>
        </authorList>
    </citation>
    <scope>NUCLEOTIDE SEQUENCE [LARGE SCALE GENOMIC DNA]</scope>
    <source>
        <strain>ATCC 43914 / DSM 3382 / VKM B-1955 / HRM2</strain>
    </source>
</reference>
<organism>
    <name type="scientific">Desulforapulum autotrophicum (strain ATCC 43914 / DSM 3382 / VKM B-1955 / HRM2)</name>
    <name type="common">Desulfobacterium autotrophicum</name>
    <dbReference type="NCBI Taxonomy" id="177437"/>
    <lineage>
        <taxon>Bacteria</taxon>
        <taxon>Pseudomonadati</taxon>
        <taxon>Thermodesulfobacteriota</taxon>
        <taxon>Desulfobacteria</taxon>
        <taxon>Desulfobacterales</taxon>
        <taxon>Desulfobacteraceae</taxon>
        <taxon>Desulforapulum</taxon>
    </lineage>
</organism>
<sequence>MDKIEIRGGKRLTGEVRISGAKNAALPLLASSILVDGAMTFTNVPDLVDVRSIKMLLRDLGAGCEEGEGTVLIDGSGIHKIEAAYELVRKMRASILVLGPLVARFGHARVSLPGGCAIGARPVDMHLKGLKALGATITIENGYIEAKADRLKGNEIYFDIPTVTGTENLMMAATLAKGTTVLRNCAREPEITALANALNLMGARVTGAGTAVIRINGVDGLSPATIHVIPDRIEAGTFMVAAAATGGDVLVTGCEPENMGGIINKLRQTGALVEIIDHGVKVSGGKSILSTDIKTLPYPGFPTDMQAQFMVLMAISQGNSVIHETIFENRFMHVNELQRMGADISISGGNYAMVRGVNALSGAEVMASDLRASASLVIAGLVARGVTTIHRVYHIDRGYEALEKKFSALGADIKRVK</sequence>
<protein>
    <recommendedName>
        <fullName evidence="1">UDP-N-acetylglucosamine 1-carboxyvinyltransferase</fullName>
        <ecNumber evidence="1">2.5.1.7</ecNumber>
    </recommendedName>
    <alternativeName>
        <fullName evidence="1">Enoylpyruvate transferase</fullName>
    </alternativeName>
    <alternativeName>
        <fullName evidence="1">UDP-N-acetylglucosamine enolpyruvyl transferase</fullName>
        <shortName evidence="1">EPT</shortName>
    </alternativeName>
</protein>
<comment type="function">
    <text evidence="1">Cell wall formation. Adds enolpyruvyl to UDP-N-acetylglucosamine.</text>
</comment>
<comment type="catalytic activity">
    <reaction evidence="1">
        <text>phosphoenolpyruvate + UDP-N-acetyl-alpha-D-glucosamine = UDP-N-acetyl-3-O-(1-carboxyvinyl)-alpha-D-glucosamine + phosphate</text>
        <dbReference type="Rhea" id="RHEA:18681"/>
        <dbReference type="ChEBI" id="CHEBI:43474"/>
        <dbReference type="ChEBI" id="CHEBI:57705"/>
        <dbReference type="ChEBI" id="CHEBI:58702"/>
        <dbReference type="ChEBI" id="CHEBI:68483"/>
        <dbReference type="EC" id="2.5.1.7"/>
    </reaction>
</comment>
<comment type="pathway">
    <text evidence="1">Cell wall biogenesis; peptidoglycan biosynthesis.</text>
</comment>
<comment type="subcellular location">
    <subcellularLocation>
        <location evidence="1">Cytoplasm</location>
    </subcellularLocation>
</comment>
<comment type="similarity">
    <text evidence="1">Belongs to the EPSP synthase family. MurA subfamily.</text>
</comment>
<gene>
    <name evidence="1" type="primary">murA</name>
    <name type="ordered locus">HRM2_21930</name>
</gene>
<dbReference type="EC" id="2.5.1.7" evidence="1"/>
<dbReference type="EMBL" id="CP001087">
    <property type="protein sequence ID" value="ACN15291.1"/>
    <property type="molecule type" value="Genomic_DNA"/>
</dbReference>
<dbReference type="RefSeq" id="WP_015904060.1">
    <property type="nucleotide sequence ID" value="NC_012108.1"/>
</dbReference>
<dbReference type="SMR" id="C0QDM7"/>
<dbReference type="STRING" id="177437.HRM2_21930"/>
<dbReference type="KEGG" id="dat:HRM2_21930"/>
<dbReference type="eggNOG" id="COG0766">
    <property type="taxonomic scope" value="Bacteria"/>
</dbReference>
<dbReference type="HOGENOM" id="CLU_027387_0_0_7"/>
<dbReference type="OrthoDB" id="9803760at2"/>
<dbReference type="UniPathway" id="UPA00219"/>
<dbReference type="Proteomes" id="UP000000442">
    <property type="component" value="Chromosome"/>
</dbReference>
<dbReference type="GO" id="GO:0005737">
    <property type="term" value="C:cytoplasm"/>
    <property type="evidence" value="ECO:0007669"/>
    <property type="project" value="UniProtKB-SubCell"/>
</dbReference>
<dbReference type="GO" id="GO:0008760">
    <property type="term" value="F:UDP-N-acetylglucosamine 1-carboxyvinyltransferase activity"/>
    <property type="evidence" value="ECO:0007669"/>
    <property type="project" value="UniProtKB-UniRule"/>
</dbReference>
<dbReference type="GO" id="GO:0051301">
    <property type="term" value="P:cell division"/>
    <property type="evidence" value="ECO:0007669"/>
    <property type="project" value="UniProtKB-KW"/>
</dbReference>
<dbReference type="GO" id="GO:0071555">
    <property type="term" value="P:cell wall organization"/>
    <property type="evidence" value="ECO:0007669"/>
    <property type="project" value="UniProtKB-KW"/>
</dbReference>
<dbReference type="GO" id="GO:0009252">
    <property type="term" value="P:peptidoglycan biosynthetic process"/>
    <property type="evidence" value="ECO:0007669"/>
    <property type="project" value="UniProtKB-UniRule"/>
</dbReference>
<dbReference type="GO" id="GO:0008360">
    <property type="term" value="P:regulation of cell shape"/>
    <property type="evidence" value="ECO:0007669"/>
    <property type="project" value="UniProtKB-KW"/>
</dbReference>
<dbReference type="GO" id="GO:0019277">
    <property type="term" value="P:UDP-N-acetylgalactosamine biosynthetic process"/>
    <property type="evidence" value="ECO:0007669"/>
    <property type="project" value="InterPro"/>
</dbReference>
<dbReference type="CDD" id="cd01555">
    <property type="entry name" value="UdpNAET"/>
    <property type="match status" value="1"/>
</dbReference>
<dbReference type="FunFam" id="3.65.10.10:FF:000001">
    <property type="entry name" value="UDP-N-acetylglucosamine 1-carboxyvinyltransferase"/>
    <property type="match status" value="1"/>
</dbReference>
<dbReference type="Gene3D" id="3.65.10.10">
    <property type="entry name" value="Enolpyruvate transferase domain"/>
    <property type="match status" value="2"/>
</dbReference>
<dbReference type="HAMAP" id="MF_00111">
    <property type="entry name" value="MurA"/>
    <property type="match status" value="1"/>
</dbReference>
<dbReference type="InterPro" id="IPR001986">
    <property type="entry name" value="Enolpyruvate_Tfrase_dom"/>
</dbReference>
<dbReference type="InterPro" id="IPR036968">
    <property type="entry name" value="Enolpyruvate_Tfrase_sf"/>
</dbReference>
<dbReference type="InterPro" id="IPR050068">
    <property type="entry name" value="MurA_subfamily"/>
</dbReference>
<dbReference type="InterPro" id="IPR013792">
    <property type="entry name" value="RNA3'P_cycl/enolpyr_Trfase_a/b"/>
</dbReference>
<dbReference type="InterPro" id="IPR005750">
    <property type="entry name" value="UDP_GlcNAc_COvinyl_MurA"/>
</dbReference>
<dbReference type="NCBIfam" id="TIGR01072">
    <property type="entry name" value="murA"/>
    <property type="match status" value="1"/>
</dbReference>
<dbReference type="NCBIfam" id="NF006873">
    <property type="entry name" value="PRK09369.1"/>
    <property type="match status" value="1"/>
</dbReference>
<dbReference type="PANTHER" id="PTHR43783">
    <property type="entry name" value="UDP-N-ACETYLGLUCOSAMINE 1-CARBOXYVINYLTRANSFERASE"/>
    <property type="match status" value="1"/>
</dbReference>
<dbReference type="PANTHER" id="PTHR43783:SF1">
    <property type="entry name" value="UDP-N-ACETYLGLUCOSAMINE 1-CARBOXYVINYLTRANSFERASE"/>
    <property type="match status" value="1"/>
</dbReference>
<dbReference type="Pfam" id="PF00275">
    <property type="entry name" value="EPSP_synthase"/>
    <property type="match status" value="1"/>
</dbReference>
<dbReference type="SUPFAM" id="SSF55205">
    <property type="entry name" value="EPT/RTPC-like"/>
    <property type="match status" value="1"/>
</dbReference>
<proteinExistence type="inferred from homology"/>
<feature type="chain" id="PRO_1000202926" description="UDP-N-acetylglucosamine 1-carboxyvinyltransferase">
    <location>
        <begin position="1"/>
        <end position="417"/>
    </location>
</feature>
<feature type="active site" description="Proton donor" evidence="1">
    <location>
        <position position="116"/>
    </location>
</feature>
<feature type="binding site" evidence="1">
    <location>
        <begin position="22"/>
        <end position="23"/>
    </location>
    <ligand>
        <name>phosphoenolpyruvate</name>
        <dbReference type="ChEBI" id="CHEBI:58702"/>
    </ligand>
</feature>
<feature type="binding site" evidence="1">
    <location>
        <position position="92"/>
    </location>
    <ligand>
        <name>UDP-N-acetyl-alpha-D-glucosamine</name>
        <dbReference type="ChEBI" id="CHEBI:57705"/>
    </ligand>
</feature>
<feature type="binding site" evidence="1">
    <location>
        <position position="304"/>
    </location>
    <ligand>
        <name>UDP-N-acetyl-alpha-D-glucosamine</name>
        <dbReference type="ChEBI" id="CHEBI:57705"/>
    </ligand>
</feature>
<feature type="binding site" evidence="1">
    <location>
        <position position="326"/>
    </location>
    <ligand>
        <name>UDP-N-acetyl-alpha-D-glucosamine</name>
        <dbReference type="ChEBI" id="CHEBI:57705"/>
    </ligand>
</feature>
<feature type="modified residue" description="2-(S-cysteinyl)pyruvic acid O-phosphothioketal" evidence="1">
    <location>
        <position position="116"/>
    </location>
</feature>
<accession>C0QDM7</accession>
<name>MURA_DESAH</name>